<accession>P70451</accession>
<accession>Q61561</accession>
<accession>Q6PEE5</accession>
<accession>Q80UI3</accession>
<accession>Q8C481</accession>
<accession>Q9EQ77</accession>
<dbReference type="EC" id="2.7.10.2"/>
<dbReference type="EMBL" id="U76762">
    <property type="protein sequence ID" value="AAB18988.1"/>
    <property type="molecule type" value="mRNA"/>
</dbReference>
<dbReference type="EMBL" id="M32054">
    <property type="protein sequence ID" value="AAA37617.1"/>
    <property type="molecule type" value="mRNA"/>
</dbReference>
<dbReference type="EMBL" id="AF286537">
    <property type="protein sequence ID" value="AAG40730.1"/>
    <property type="molecule type" value="mRNA"/>
</dbReference>
<dbReference type="EMBL" id="BC051249">
    <property type="protein sequence ID" value="AAH51249.1"/>
    <property type="molecule type" value="mRNA"/>
</dbReference>
<dbReference type="EMBL" id="BC058100">
    <property type="protein sequence ID" value="AAH58100.1"/>
    <property type="molecule type" value="mRNA"/>
</dbReference>
<dbReference type="EMBL" id="AK082799">
    <property type="protein sequence ID" value="BAC38626.1"/>
    <property type="molecule type" value="mRNA"/>
</dbReference>
<dbReference type="CCDS" id="CCDS28936.1">
    <molecule id="P70451-1"/>
</dbReference>
<dbReference type="CCDS" id="CCDS28937.1">
    <molecule id="P70451-4"/>
</dbReference>
<dbReference type="CCDS" id="CCDS89132.1">
    <molecule id="P70451-2"/>
</dbReference>
<dbReference type="PIR" id="I49663">
    <property type="entry name" value="I49663"/>
</dbReference>
<dbReference type="RefSeq" id="NP_001033086.2">
    <molecule id="P70451-1"/>
    <property type="nucleotide sequence ID" value="NM_001037997.4"/>
</dbReference>
<dbReference type="RefSeq" id="NP_001273344.1">
    <molecule id="P70451-2"/>
    <property type="nucleotide sequence ID" value="NM_001286415.1"/>
</dbReference>
<dbReference type="RefSeq" id="NP_001390288.1">
    <molecule id="P70451-5"/>
    <property type="nucleotide sequence ID" value="NM_001403359.1"/>
</dbReference>
<dbReference type="RefSeq" id="NP_001390289.1">
    <molecule id="P70451-5"/>
    <property type="nucleotide sequence ID" value="NM_001403360.1"/>
</dbReference>
<dbReference type="RefSeq" id="NP_032026.2">
    <molecule id="P70451-4"/>
    <property type="nucleotide sequence ID" value="NM_008000.2"/>
</dbReference>
<dbReference type="RefSeq" id="XP_006523703.1">
    <molecule id="P70451-1"/>
    <property type="nucleotide sequence ID" value="XM_006523640.5"/>
</dbReference>
<dbReference type="RefSeq" id="XP_006523704.1">
    <molecule id="P70451-1"/>
    <property type="nucleotide sequence ID" value="XM_006523641.5"/>
</dbReference>
<dbReference type="RefSeq" id="XP_006523706.1">
    <molecule id="P70451-5"/>
    <property type="nucleotide sequence ID" value="XM_006523643.5"/>
</dbReference>
<dbReference type="RefSeq" id="XP_011244595.1">
    <property type="nucleotide sequence ID" value="XM_011246293.2"/>
</dbReference>
<dbReference type="RefSeq" id="XP_036016207.1">
    <molecule id="P70451-1"/>
    <property type="nucleotide sequence ID" value="XM_036160314.1"/>
</dbReference>
<dbReference type="SMR" id="P70451"/>
<dbReference type="BioGRID" id="199633">
    <property type="interactions" value="5"/>
</dbReference>
<dbReference type="FunCoup" id="P70451">
    <property type="interactions" value="2302"/>
</dbReference>
<dbReference type="IntAct" id="P70451">
    <property type="interactions" value="1"/>
</dbReference>
<dbReference type="MINT" id="P70451"/>
<dbReference type="STRING" id="10090.ENSMUSP00000000129"/>
<dbReference type="iPTMnet" id="P70451"/>
<dbReference type="PhosphoSitePlus" id="P70451"/>
<dbReference type="SwissPalm" id="P70451"/>
<dbReference type="jPOST" id="P70451"/>
<dbReference type="PaxDb" id="10090-ENSMUSP00000000129"/>
<dbReference type="PeptideAtlas" id="P70451"/>
<dbReference type="ProteomicsDB" id="272987">
    <molecule id="P70451-1"/>
</dbReference>
<dbReference type="ProteomicsDB" id="272988">
    <molecule id="P70451-2"/>
</dbReference>
<dbReference type="ProteomicsDB" id="272989">
    <molecule id="P70451-3"/>
</dbReference>
<dbReference type="ProteomicsDB" id="272990">
    <molecule id="P70451-4"/>
</dbReference>
<dbReference type="ProteomicsDB" id="272991">
    <molecule id="P70451-5"/>
</dbReference>
<dbReference type="Pumba" id="P70451"/>
<dbReference type="Antibodypedia" id="2083">
    <property type="antibodies" value="599 antibodies from 40 providers"/>
</dbReference>
<dbReference type="DNASU" id="14158"/>
<dbReference type="Ensembl" id="ENSMUST00000000129.14">
    <molecule id="P70451-1"/>
    <property type="protein sequence ID" value="ENSMUSP00000000129.7"/>
    <property type="gene ID" value="ENSMUSG00000000127.16"/>
</dbReference>
<dbReference type="Ensembl" id="ENSMUST00000038080.7">
    <molecule id="P70451-4"/>
    <property type="protein sequence ID" value="ENSMUSP00000037418.6"/>
    <property type="gene ID" value="ENSMUSG00000000127.16"/>
</dbReference>
<dbReference type="Ensembl" id="ENSMUST00000233190.2">
    <molecule id="P70451-2"/>
    <property type="protein sequence ID" value="ENSMUSP00000156523.2"/>
    <property type="gene ID" value="ENSMUSG00000000127.16"/>
</dbReference>
<dbReference type="GeneID" id="14158"/>
<dbReference type="KEGG" id="mmu:14158"/>
<dbReference type="UCSC" id="uc008dfo.2">
    <molecule id="P70451-2"/>
    <property type="organism name" value="mouse"/>
</dbReference>
<dbReference type="UCSC" id="uc008dfp.1">
    <molecule id="P70451-3"/>
    <property type="organism name" value="mouse"/>
</dbReference>
<dbReference type="UCSC" id="uc008dfq.3">
    <molecule id="P70451-1"/>
    <property type="organism name" value="mouse"/>
</dbReference>
<dbReference type="UCSC" id="uc008dfr.2">
    <molecule id="P70451-5"/>
    <property type="organism name" value="mouse"/>
</dbReference>
<dbReference type="UCSC" id="uc008dfs.2">
    <molecule id="P70451-4"/>
    <property type="organism name" value="mouse"/>
</dbReference>
<dbReference type="AGR" id="MGI:105917"/>
<dbReference type="CTD" id="2241"/>
<dbReference type="MGI" id="MGI:105917">
    <property type="gene designation" value="Fer"/>
</dbReference>
<dbReference type="VEuPathDB" id="HostDB:ENSMUSG00000000127"/>
<dbReference type="eggNOG" id="KOG0194">
    <property type="taxonomic scope" value="Eukaryota"/>
</dbReference>
<dbReference type="GeneTree" id="ENSGT00940000154997"/>
<dbReference type="HOGENOM" id="CLU_005265_0_0_1"/>
<dbReference type="InParanoid" id="P70451"/>
<dbReference type="OMA" id="QEHYHES"/>
<dbReference type="OrthoDB" id="546826at2759"/>
<dbReference type="PhylomeDB" id="P70451"/>
<dbReference type="TreeFam" id="TF315363"/>
<dbReference type="Reactome" id="R-MMU-1433557">
    <property type="pathway name" value="Signaling by SCF-KIT"/>
</dbReference>
<dbReference type="BioGRID-ORCS" id="14158">
    <property type="hits" value="1 hit in 80 CRISPR screens"/>
</dbReference>
<dbReference type="ChiTaRS" id="Fer">
    <property type="organism name" value="mouse"/>
</dbReference>
<dbReference type="PRO" id="PR:P70451"/>
<dbReference type="Proteomes" id="UP000000589">
    <property type="component" value="Chromosome 17"/>
</dbReference>
<dbReference type="RNAct" id="P70451">
    <property type="molecule type" value="protein"/>
</dbReference>
<dbReference type="Bgee" id="ENSMUSG00000000127">
    <property type="expression patterns" value="Expressed in spermatid and 244 other cell types or tissues"/>
</dbReference>
<dbReference type="ExpressionAtlas" id="P70451">
    <property type="expression patterns" value="baseline and differential"/>
</dbReference>
<dbReference type="GO" id="GO:0015629">
    <property type="term" value="C:actin cytoskeleton"/>
    <property type="evidence" value="ECO:0007669"/>
    <property type="project" value="Ensembl"/>
</dbReference>
<dbReference type="GO" id="GO:0005912">
    <property type="term" value="C:adherens junction"/>
    <property type="evidence" value="ECO:0007669"/>
    <property type="project" value="Ensembl"/>
</dbReference>
<dbReference type="GO" id="GO:0005938">
    <property type="term" value="C:cell cortex"/>
    <property type="evidence" value="ECO:0007669"/>
    <property type="project" value="UniProtKB-SubCell"/>
</dbReference>
<dbReference type="GO" id="GO:0000785">
    <property type="term" value="C:chromatin"/>
    <property type="evidence" value="ECO:0000250"/>
    <property type="project" value="UniProtKB"/>
</dbReference>
<dbReference type="GO" id="GO:0005737">
    <property type="term" value="C:cytoplasm"/>
    <property type="evidence" value="ECO:0000250"/>
    <property type="project" value="UniProtKB"/>
</dbReference>
<dbReference type="GO" id="GO:0009898">
    <property type="term" value="C:cytoplasmic side of plasma membrane"/>
    <property type="evidence" value="ECO:0000250"/>
    <property type="project" value="UniProtKB"/>
</dbReference>
<dbReference type="GO" id="GO:0005829">
    <property type="term" value="C:cytosol"/>
    <property type="evidence" value="ECO:0007669"/>
    <property type="project" value="Ensembl"/>
</dbReference>
<dbReference type="GO" id="GO:0030027">
    <property type="term" value="C:lamellipodium"/>
    <property type="evidence" value="ECO:0007669"/>
    <property type="project" value="Ensembl"/>
</dbReference>
<dbReference type="GO" id="GO:0015630">
    <property type="term" value="C:microtubule cytoskeleton"/>
    <property type="evidence" value="ECO:0007669"/>
    <property type="project" value="Ensembl"/>
</dbReference>
<dbReference type="GO" id="GO:0005634">
    <property type="term" value="C:nucleus"/>
    <property type="evidence" value="ECO:0007669"/>
    <property type="project" value="UniProtKB-SubCell"/>
</dbReference>
<dbReference type="GO" id="GO:0032991">
    <property type="term" value="C:protein-containing complex"/>
    <property type="evidence" value="ECO:0007669"/>
    <property type="project" value="Ensembl"/>
</dbReference>
<dbReference type="GO" id="GO:0005524">
    <property type="term" value="F:ATP binding"/>
    <property type="evidence" value="ECO:0007669"/>
    <property type="project" value="UniProtKB-KW"/>
</dbReference>
<dbReference type="GO" id="GO:0005154">
    <property type="term" value="F:epidermal growth factor receptor binding"/>
    <property type="evidence" value="ECO:0000250"/>
    <property type="project" value="UniProtKB"/>
</dbReference>
<dbReference type="GO" id="GO:0008289">
    <property type="term" value="F:lipid binding"/>
    <property type="evidence" value="ECO:0000250"/>
    <property type="project" value="UniProtKB"/>
</dbReference>
<dbReference type="GO" id="GO:0004715">
    <property type="term" value="F:non-membrane spanning protein tyrosine kinase activity"/>
    <property type="evidence" value="ECO:0000250"/>
    <property type="project" value="UniProtKB"/>
</dbReference>
<dbReference type="GO" id="GO:0004672">
    <property type="term" value="F:protein kinase activity"/>
    <property type="evidence" value="ECO:0000314"/>
    <property type="project" value="MGI"/>
</dbReference>
<dbReference type="GO" id="GO:0008157">
    <property type="term" value="F:protein phosphatase 1 binding"/>
    <property type="evidence" value="ECO:0000353"/>
    <property type="project" value="UniProtKB"/>
</dbReference>
<dbReference type="GO" id="GO:0030036">
    <property type="term" value="P:actin cytoskeleton organization"/>
    <property type="evidence" value="ECO:0000315"/>
    <property type="project" value="UniProtKB"/>
</dbReference>
<dbReference type="GO" id="GO:0034333">
    <property type="term" value="P:adherens junction assembly"/>
    <property type="evidence" value="ECO:0007669"/>
    <property type="project" value="Ensembl"/>
</dbReference>
<dbReference type="GO" id="GO:0120179">
    <property type="term" value="P:adherens junction disassembly"/>
    <property type="evidence" value="ECO:0007669"/>
    <property type="project" value="Ensembl"/>
</dbReference>
<dbReference type="GO" id="GO:0007155">
    <property type="term" value="P:cell adhesion"/>
    <property type="evidence" value="ECO:0000315"/>
    <property type="project" value="MGI"/>
</dbReference>
<dbReference type="GO" id="GO:0044331">
    <property type="term" value="P:cell-cell adhesion mediated by cadherin"/>
    <property type="evidence" value="ECO:0000315"/>
    <property type="project" value="UniProtKB"/>
</dbReference>
<dbReference type="GO" id="GO:0036006">
    <property type="term" value="P:cellular response to macrophage colony-stimulating factor stimulus"/>
    <property type="evidence" value="ECO:0007669"/>
    <property type="project" value="Ensembl"/>
</dbReference>
<dbReference type="GO" id="GO:0034614">
    <property type="term" value="P:cellular response to reactive oxygen species"/>
    <property type="evidence" value="ECO:0000315"/>
    <property type="project" value="UniProtKB"/>
</dbReference>
<dbReference type="GO" id="GO:0006935">
    <property type="term" value="P:chemotaxis"/>
    <property type="evidence" value="ECO:0000315"/>
    <property type="project" value="MGI"/>
</dbReference>
<dbReference type="GO" id="GO:0019221">
    <property type="term" value="P:cytokine-mediated signaling pathway"/>
    <property type="evidence" value="ECO:0000250"/>
    <property type="project" value="UniProtKB"/>
</dbReference>
<dbReference type="GO" id="GO:0050904">
    <property type="term" value="P:diapedesis"/>
    <property type="evidence" value="ECO:0000315"/>
    <property type="project" value="UniProtKB"/>
</dbReference>
<dbReference type="GO" id="GO:0035426">
    <property type="term" value="P:extracellular matrix-cell signaling"/>
    <property type="evidence" value="ECO:0000315"/>
    <property type="project" value="UniProtKB"/>
</dbReference>
<dbReference type="GO" id="GO:0038095">
    <property type="term" value="P:Fc-epsilon receptor signaling pathway"/>
    <property type="evidence" value="ECO:0000315"/>
    <property type="project" value="UniProtKB"/>
</dbReference>
<dbReference type="GO" id="GO:0007281">
    <property type="term" value="P:germ cell development"/>
    <property type="evidence" value="ECO:0007669"/>
    <property type="project" value="Ensembl"/>
</dbReference>
<dbReference type="GO" id="GO:0008286">
    <property type="term" value="P:insulin receptor signaling pathway"/>
    <property type="evidence" value="ECO:0000314"/>
    <property type="project" value="UniProtKB"/>
</dbReference>
<dbReference type="GO" id="GO:0070102">
    <property type="term" value="P:interleukin-6-mediated signaling pathway"/>
    <property type="evidence" value="ECO:0007669"/>
    <property type="project" value="Ensembl"/>
</dbReference>
<dbReference type="GO" id="GO:0038109">
    <property type="term" value="P:Kit signaling pathway"/>
    <property type="evidence" value="ECO:0000315"/>
    <property type="project" value="UniProtKB"/>
</dbReference>
<dbReference type="GO" id="GO:0000226">
    <property type="term" value="P:microtubule cytoskeleton organization"/>
    <property type="evidence" value="ECO:0000250"/>
    <property type="project" value="UniProtKB"/>
</dbReference>
<dbReference type="GO" id="GO:0033007">
    <property type="term" value="P:negative regulation of mast cell activation involved in immune response"/>
    <property type="evidence" value="ECO:0000315"/>
    <property type="project" value="UniProtKB"/>
</dbReference>
<dbReference type="GO" id="GO:0018108">
    <property type="term" value="P:peptidyl-tyrosine phosphorylation"/>
    <property type="evidence" value="ECO:0000250"/>
    <property type="project" value="UniProtKB"/>
</dbReference>
<dbReference type="GO" id="GO:0048008">
    <property type="term" value="P:platelet-derived growth factor receptor signaling pathway"/>
    <property type="evidence" value="ECO:0000314"/>
    <property type="project" value="UniProtKB"/>
</dbReference>
<dbReference type="GO" id="GO:0030838">
    <property type="term" value="P:positive regulation of actin filament polymerization"/>
    <property type="evidence" value="ECO:0000250"/>
    <property type="project" value="UniProtKB"/>
</dbReference>
<dbReference type="GO" id="GO:0030335">
    <property type="term" value="P:positive regulation of cell migration"/>
    <property type="evidence" value="ECO:0000250"/>
    <property type="project" value="UniProtKB"/>
</dbReference>
<dbReference type="GO" id="GO:0008284">
    <property type="term" value="P:positive regulation of cell population proliferation"/>
    <property type="evidence" value="ECO:0007669"/>
    <property type="project" value="Ensembl"/>
</dbReference>
<dbReference type="GO" id="GO:0051092">
    <property type="term" value="P:positive regulation of NF-kappaB transcription factor activity"/>
    <property type="evidence" value="ECO:0000250"/>
    <property type="project" value="UniProtKB"/>
</dbReference>
<dbReference type="GO" id="GO:0051897">
    <property type="term" value="P:positive regulation of phosphatidylinositol 3-kinase/protein kinase B signal transduction"/>
    <property type="evidence" value="ECO:0000314"/>
    <property type="project" value="UniProtKB"/>
</dbReference>
<dbReference type="GO" id="GO:0042058">
    <property type="term" value="P:regulation of epidermal growth factor receptor signaling pathway"/>
    <property type="evidence" value="ECO:0000250"/>
    <property type="project" value="UniProtKB"/>
</dbReference>
<dbReference type="GO" id="GO:0010762">
    <property type="term" value="P:regulation of fibroblast migration"/>
    <property type="evidence" value="ECO:0000315"/>
    <property type="project" value="UniProtKB"/>
</dbReference>
<dbReference type="GO" id="GO:0010591">
    <property type="term" value="P:regulation of lamellipodium assembly"/>
    <property type="evidence" value="ECO:0000250"/>
    <property type="project" value="UniProtKB"/>
</dbReference>
<dbReference type="GO" id="GO:0001932">
    <property type="term" value="P:regulation of protein phosphorylation"/>
    <property type="evidence" value="ECO:0000315"/>
    <property type="project" value="UniProtKB"/>
</dbReference>
<dbReference type="GO" id="GO:0032496">
    <property type="term" value="P:response to lipopolysaccharide"/>
    <property type="evidence" value="ECO:0000315"/>
    <property type="project" value="UniProtKB"/>
</dbReference>
<dbReference type="GO" id="GO:0036119">
    <property type="term" value="P:response to platelet-derived growth factor"/>
    <property type="evidence" value="ECO:0000314"/>
    <property type="project" value="UniProtKB"/>
</dbReference>
<dbReference type="GO" id="GO:0072520">
    <property type="term" value="P:seminiferous tubule development"/>
    <property type="evidence" value="ECO:0007669"/>
    <property type="project" value="Ensembl"/>
</dbReference>
<dbReference type="GO" id="GO:0060009">
    <property type="term" value="P:Sertoli cell development"/>
    <property type="evidence" value="ECO:0007669"/>
    <property type="project" value="Ensembl"/>
</dbReference>
<dbReference type="GO" id="GO:0007165">
    <property type="term" value="P:signal transduction"/>
    <property type="evidence" value="ECO:0000314"/>
    <property type="project" value="MGI"/>
</dbReference>
<dbReference type="GO" id="GO:0034446">
    <property type="term" value="P:substrate adhesion-dependent cell spreading"/>
    <property type="evidence" value="ECO:0000315"/>
    <property type="project" value="UniProtKB"/>
</dbReference>
<dbReference type="CDD" id="cd07686">
    <property type="entry name" value="F-BAR_Fer"/>
    <property type="match status" value="1"/>
</dbReference>
<dbReference type="CDD" id="cd10361">
    <property type="entry name" value="SH2_Fps_family"/>
    <property type="match status" value="1"/>
</dbReference>
<dbReference type="FunFam" id="1.10.287.160:FF:000005">
    <property type="entry name" value="Tyrosine-protein kinase"/>
    <property type="match status" value="1"/>
</dbReference>
<dbReference type="FunFam" id="1.10.510.10:FF:000622">
    <property type="entry name" value="Tyrosine-protein kinase"/>
    <property type="match status" value="1"/>
</dbReference>
<dbReference type="FunFam" id="1.20.1270.60:FF:000029">
    <property type="entry name" value="Tyrosine-protein kinase"/>
    <property type="match status" value="1"/>
</dbReference>
<dbReference type="FunFam" id="3.30.200.20:FF:000089">
    <property type="entry name" value="Tyrosine-protein kinase"/>
    <property type="match status" value="1"/>
</dbReference>
<dbReference type="FunFam" id="3.30.505.10:FF:000020">
    <property type="entry name" value="Tyrosine-protein kinase"/>
    <property type="match status" value="1"/>
</dbReference>
<dbReference type="Gene3D" id="1.20.1270.60">
    <property type="entry name" value="Arfaptin homology (AH) domain/BAR domain"/>
    <property type="match status" value="1"/>
</dbReference>
<dbReference type="Gene3D" id="1.10.287.160">
    <property type="entry name" value="HR1 repeat"/>
    <property type="match status" value="1"/>
</dbReference>
<dbReference type="Gene3D" id="3.30.200.20">
    <property type="entry name" value="Phosphorylase Kinase, domain 1"/>
    <property type="match status" value="1"/>
</dbReference>
<dbReference type="Gene3D" id="3.30.505.10">
    <property type="entry name" value="SH2 domain"/>
    <property type="match status" value="1"/>
</dbReference>
<dbReference type="Gene3D" id="1.10.510.10">
    <property type="entry name" value="Transferase(Phosphotransferase) domain 1"/>
    <property type="match status" value="1"/>
</dbReference>
<dbReference type="InterPro" id="IPR027267">
    <property type="entry name" value="AH/BAR_dom_sf"/>
</dbReference>
<dbReference type="InterPro" id="IPR031160">
    <property type="entry name" value="F_BAR"/>
</dbReference>
<dbReference type="InterPro" id="IPR001060">
    <property type="entry name" value="FCH_dom"/>
</dbReference>
<dbReference type="InterPro" id="IPR037452">
    <property type="entry name" value="Fer_F-BAR"/>
</dbReference>
<dbReference type="InterPro" id="IPR035849">
    <property type="entry name" value="Fes/Fps/Fer_SH2"/>
</dbReference>
<dbReference type="InterPro" id="IPR011009">
    <property type="entry name" value="Kinase-like_dom_sf"/>
</dbReference>
<dbReference type="InterPro" id="IPR050198">
    <property type="entry name" value="Non-receptor_tyrosine_kinases"/>
</dbReference>
<dbReference type="InterPro" id="IPR000719">
    <property type="entry name" value="Prot_kinase_dom"/>
</dbReference>
<dbReference type="InterPro" id="IPR017441">
    <property type="entry name" value="Protein_kinase_ATP_BS"/>
</dbReference>
<dbReference type="InterPro" id="IPR001245">
    <property type="entry name" value="Ser-Thr/Tyr_kinase_cat_dom"/>
</dbReference>
<dbReference type="InterPro" id="IPR000980">
    <property type="entry name" value="SH2"/>
</dbReference>
<dbReference type="InterPro" id="IPR036860">
    <property type="entry name" value="SH2_dom_sf"/>
</dbReference>
<dbReference type="InterPro" id="IPR016250">
    <property type="entry name" value="Tyr-prot_kinase_Fes/Fps"/>
</dbReference>
<dbReference type="InterPro" id="IPR008266">
    <property type="entry name" value="Tyr_kinase_AS"/>
</dbReference>
<dbReference type="InterPro" id="IPR020635">
    <property type="entry name" value="Tyr_kinase_cat_dom"/>
</dbReference>
<dbReference type="PANTHER" id="PTHR24418">
    <property type="entry name" value="TYROSINE-PROTEIN KINASE"/>
    <property type="match status" value="1"/>
</dbReference>
<dbReference type="Pfam" id="PF00611">
    <property type="entry name" value="FCH"/>
    <property type="match status" value="1"/>
</dbReference>
<dbReference type="Pfam" id="PF07714">
    <property type="entry name" value="PK_Tyr_Ser-Thr"/>
    <property type="match status" value="1"/>
</dbReference>
<dbReference type="Pfam" id="PF00017">
    <property type="entry name" value="SH2"/>
    <property type="match status" value="1"/>
</dbReference>
<dbReference type="PIRSF" id="PIRSF000632">
    <property type="entry name" value="TyrPK_fps"/>
    <property type="match status" value="1"/>
</dbReference>
<dbReference type="PRINTS" id="PR00401">
    <property type="entry name" value="SH2DOMAIN"/>
</dbReference>
<dbReference type="PRINTS" id="PR00109">
    <property type="entry name" value="TYRKINASE"/>
</dbReference>
<dbReference type="SMART" id="SM00055">
    <property type="entry name" value="FCH"/>
    <property type="match status" value="1"/>
</dbReference>
<dbReference type="SMART" id="SM00252">
    <property type="entry name" value="SH2"/>
    <property type="match status" value="1"/>
</dbReference>
<dbReference type="SMART" id="SM00219">
    <property type="entry name" value="TyrKc"/>
    <property type="match status" value="1"/>
</dbReference>
<dbReference type="SUPFAM" id="SSF103657">
    <property type="entry name" value="BAR/IMD domain-like"/>
    <property type="match status" value="1"/>
</dbReference>
<dbReference type="SUPFAM" id="SSF56112">
    <property type="entry name" value="Protein kinase-like (PK-like)"/>
    <property type="match status" value="1"/>
</dbReference>
<dbReference type="SUPFAM" id="SSF55550">
    <property type="entry name" value="SH2 domain"/>
    <property type="match status" value="1"/>
</dbReference>
<dbReference type="PROSITE" id="PS51741">
    <property type="entry name" value="F_BAR"/>
    <property type="match status" value="1"/>
</dbReference>
<dbReference type="PROSITE" id="PS00107">
    <property type="entry name" value="PROTEIN_KINASE_ATP"/>
    <property type="match status" value="1"/>
</dbReference>
<dbReference type="PROSITE" id="PS50011">
    <property type="entry name" value="PROTEIN_KINASE_DOM"/>
    <property type="match status" value="1"/>
</dbReference>
<dbReference type="PROSITE" id="PS00109">
    <property type="entry name" value="PROTEIN_KINASE_TYR"/>
    <property type="match status" value="1"/>
</dbReference>
<dbReference type="PROSITE" id="PS50001">
    <property type="entry name" value="SH2"/>
    <property type="match status" value="1"/>
</dbReference>
<gene>
    <name type="primary">Fer</name>
    <name type="synonym">Fert2</name>
</gene>
<name>FER_MOUSE</name>
<proteinExistence type="evidence at protein level"/>
<sequence length="823" mass="94579">MGFGSDLKNSQEAVLKLQDWELRLLETVKKFMALRIKSDKEYAYTLQNLCNQVDKESTVQVNYVSNVSKSWLLMIQQTEQLSRIMKTHAEDLNSGPLHRLTMMIKDKQQVKKSYVGIHQQIEAEMIKVTKTELEKLKSSYRQLIKEMNSAKEKYKEALAKGKETEKAKERYDKATMKLHMLHNQYVLALKGAQLHQSQYYDTTLPLLLDSVQKMQEEMIKALKGIFDDYSQITSLVTEEIVNVHKEIQMSVEQIDPSTEYNNFIDVHRTTAAKEQEIEFDTSLLEENENLQANEIMWNNLTADSLQVMLKTLAEELTQTQQMLLHKEAAVLELEKRIEESFETCEKKSDIVLLLGQKQALEELKQSVQQLRCTEAKCAAQKALLEQKVQENDGKEPPPVVNYEEDARSVTSMERKERLSKFESIRHSIAGIIKSPKSVLGSSTQVCDVISVGERPLAEHDWYHGAIPRIEAQELLKQQGDFLVRESHGKPGEYVLSVYSDGQRRHFIIQFVDNLYRFEGTGFSNIPQLIDHHFNTKQVITKKSGVVLLNPIPKDKKWVLNHEDVSLGELLGKGNFGEVYKGTLKDKTPVAIKTCKEDLPQELKIKFLQEAKILKQYDHPNIVKLIGVCTQRQPVYIIMELVPGGDFLTFLRKRKDELKLKQLVRFSLDVAAGMLYLESKNCIHRDLAARNCLVGENNTLKISDFGMSRQEDGGVYSSSGLKQIPIKWTAPEALNYGRYSSESDVWSFGILLWETFSLGVCPYPGMTNQQAREQVERGYRMSAPQNCPEEVFTIMMKCWDYKPENRPKFNDLHKELTVIKKMIT</sequence>
<reference key="1">
    <citation type="submission" date="1996-10" db="EMBL/GenBank/DDBJ databases">
        <title>Murine Fer.</title>
        <authorList>
            <person name="Letwin K."/>
            <person name="Pawson T."/>
        </authorList>
    </citation>
    <scope>NUCLEOTIDE SEQUENCE [MRNA] (ISOFORM 1)</scope>
</reference>
<reference key="2">
    <citation type="journal article" date="1990" name="Mol. Cell. Biol.">
        <title>A murine fer testis-specific transcript (ferT) encodes a truncated Fer protein.</title>
        <authorList>
            <person name="Fischman K."/>
            <person name="Edman J.C."/>
            <person name="Shackleford G.M."/>
            <person name="Turner J.A."/>
            <person name="Rutter W.J."/>
            <person name="Nir U."/>
        </authorList>
    </citation>
    <scope>NUCLEOTIDE SEQUENCE [MRNA] (ISOFORM 4)</scope>
    <scope>AUTOPHOSPHORYLATION</scope>
    <scope>TISSUE SPECIFICITY</scope>
</reference>
<reference key="3">
    <citation type="journal article" date="2000" name="J. Biol. Chem.">
        <title>The protein-tyrosine kinase fer associates with signaling complexes containing insulin receptor substrate-1 and phosphatidylinositol 3-kinase.</title>
        <authorList>
            <person name="Iwanishi M."/>
            <person name="Czech M.P."/>
            <person name="Cherniack A.D."/>
        </authorList>
    </citation>
    <scope>NUCLEOTIDE SEQUENCE [MRNA] (ISOFORM 3)</scope>
    <scope>FUNCTION</scope>
    <scope>AUTOPHOSPHORYLATION</scope>
    <scope>INTERACTION WITH IRS1 AND PIK3R1</scope>
    <scope>SUBUNIT</scope>
</reference>
<reference key="4">
    <citation type="journal article" date="2004" name="Genome Res.">
        <title>The status, quality, and expansion of the NIH full-length cDNA project: the Mammalian Gene Collection (MGC).</title>
        <authorList>
            <consortium name="The MGC Project Team"/>
        </authorList>
    </citation>
    <scope>NUCLEOTIDE SEQUENCE [LARGE SCALE MRNA] (ISOFORM 2)</scope>
    <source>
        <strain>C57BL/6J</strain>
        <strain>FVB/N-3</strain>
        <tissue>Brain</tissue>
        <tissue>Mammary tumor</tissue>
    </source>
</reference>
<reference key="5">
    <citation type="journal article" date="2005" name="Science">
        <title>The transcriptional landscape of the mammalian genome.</title>
        <authorList>
            <person name="Carninci P."/>
            <person name="Kasukawa T."/>
            <person name="Katayama S."/>
            <person name="Gough J."/>
            <person name="Frith M.C."/>
            <person name="Maeda N."/>
            <person name="Oyama R."/>
            <person name="Ravasi T."/>
            <person name="Lenhard B."/>
            <person name="Wells C."/>
            <person name="Kodzius R."/>
            <person name="Shimokawa K."/>
            <person name="Bajic V.B."/>
            <person name="Brenner S.E."/>
            <person name="Batalov S."/>
            <person name="Forrest A.R."/>
            <person name="Zavolan M."/>
            <person name="Davis M.J."/>
            <person name="Wilming L.G."/>
            <person name="Aidinis V."/>
            <person name="Allen J.E."/>
            <person name="Ambesi-Impiombato A."/>
            <person name="Apweiler R."/>
            <person name="Aturaliya R.N."/>
            <person name="Bailey T.L."/>
            <person name="Bansal M."/>
            <person name="Baxter L."/>
            <person name="Beisel K.W."/>
            <person name="Bersano T."/>
            <person name="Bono H."/>
            <person name="Chalk A.M."/>
            <person name="Chiu K.P."/>
            <person name="Choudhary V."/>
            <person name="Christoffels A."/>
            <person name="Clutterbuck D.R."/>
            <person name="Crowe M.L."/>
            <person name="Dalla E."/>
            <person name="Dalrymple B.P."/>
            <person name="de Bono B."/>
            <person name="Della Gatta G."/>
            <person name="di Bernardo D."/>
            <person name="Down T."/>
            <person name="Engstrom P."/>
            <person name="Fagiolini M."/>
            <person name="Faulkner G."/>
            <person name="Fletcher C.F."/>
            <person name="Fukushima T."/>
            <person name="Furuno M."/>
            <person name="Futaki S."/>
            <person name="Gariboldi M."/>
            <person name="Georgii-Hemming P."/>
            <person name="Gingeras T.R."/>
            <person name="Gojobori T."/>
            <person name="Green R.E."/>
            <person name="Gustincich S."/>
            <person name="Harbers M."/>
            <person name="Hayashi Y."/>
            <person name="Hensch T.K."/>
            <person name="Hirokawa N."/>
            <person name="Hill D."/>
            <person name="Huminiecki L."/>
            <person name="Iacono M."/>
            <person name="Ikeo K."/>
            <person name="Iwama A."/>
            <person name="Ishikawa T."/>
            <person name="Jakt M."/>
            <person name="Kanapin A."/>
            <person name="Katoh M."/>
            <person name="Kawasawa Y."/>
            <person name="Kelso J."/>
            <person name="Kitamura H."/>
            <person name="Kitano H."/>
            <person name="Kollias G."/>
            <person name="Krishnan S.P."/>
            <person name="Kruger A."/>
            <person name="Kummerfeld S.K."/>
            <person name="Kurochkin I.V."/>
            <person name="Lareau L.F."/>
            <person name="Lazarevic D."/>
            <person name="Lipovich L."/>
            <person name="Liu J."/>
            <person name="Liuni S."/>
            <person name="McWilliam S."/>
            <person name="Madan Babu M."/>
            <person name="Madera M."/>
            <person name="Marchionni L."/>
            <person name="Matsuda H."/>
            <person name="Matsuzawa S."/>
            <person name="Miki H."/>
            <person name="Mignone F."/>
            <person name="Miyake S."/>
            <person name="Morris K."/>
            <person name="Mottagui-Tabar S."/>
            <person name="Mulder N."/>
            <person name="Nakano N."/>
            <person name="Nakauchi H."/>
            <person name="Ng P."/>
            <person name="Nilsson R."/>
            <person name="Nishiguchi S."/>
            <person name="Nishikawa S."/>
            <person name="Nori F."/>
            <person name="Ohara O."/>
            <person name="Okazaki Y."/>
            <person name="Orlando V."/>
            <person name="Pang K.C."/>
            <person name="Pavan W.J."/>
            <person name="Pavesi G."/>
            <person name="Pesole G."/>
            <person name="Petrovsky N."/>
            <person name="Piazza S."/>
            <person name="Reed J."/>
            <person name="Reid J.F."/>
            <person name="Ring B.Z."/>
            <person name="Ringwald M."/>
            <person name="Rost B."/>
            <person name="Ruan Y."/>
            <person name="Salzberg S.L."/>
            <person name="Sandelin A."/>
            <person name="Schneider C."/>
            <person name="Schoenbach C."/>
            <person name="Sekiguchi K."/>
            <person name="Semple C.A."/>
            <person name="Seno S."/>
            <person name="Sessa L."/>
            <person name="Sheng Y."/>
            <person name="Shibata Y."/>
            <person name="Shimada H."/>
            <person name="Shimada K."/>
            <person name="Silva D."/>
            <person name="Sinclair B."/>
            <person name="Sperling S."/>
            <person name="Stupka E."/>
            <person name="Sugiura K."/>
            <person name="Sultana R."/>
            <person name="Takenaka Y."/>
            <person name="Taki K."/>
            <person name="Tammoja K."/>
            <person name="Tan S.L."/>
            <person name="Tang S."/>
            <person name="Taylor M.S."/>
            <person name="Tegner J."/>
            <person name="Teichmann S.A."/>
            <person name="Ueda H.R."/>
            <person name="van Nimwegen E."/>
            <person name="Verardo R."/>
            <person name="Wei C.L."/>
            <person name="Yagi K."/>
            <person name="Yamanishi H."/>
            <person name="Zabarovsky E."/>
            <person name="Zhu S."/>
            <person name="Zimmer A."/>
            <person name="Hide W."/>
            <person name="Bult C."/>
            <person name="Grimmond S.M."/>
            <person name="Teasdale R.D."/>
            <person name="Liu E.T."/>
            <person name="Brusic V."/>
            <person name="Quackenbush J."/>
            <person name="Wahlestedt C."/>
            <person name="Mattick J.S."/>
            <person name="Hume D.A."/>
            <person name="Kai C."/>
            <person name="Sasaki D."/>
            <person name="Tomaru Y."/>
            <person name="Fukuda S."/>
            <person name="Kanamori-Katayama M."/>
            <person name="Suzuki M."/>
            <person name="Aoki J."/>
            <person name="Arakawa T."/>
            <person name="Iida J."/>
            <person name="Imamura K."/>
            <person name="Itoh M."/>
            <person name="Kato T."/>
            <person name="Kawaji H."/>
            <person name="Kawagashira N."/>
            <person name="Kawashima T."/>
            <person name="Kojima M."/>
            <person name="Kondo S."/>
            <person name="Konno H."/>
            <person name="Nakano K."/>
            <person name="Ninomiya N."/>
            <person name="Nishio T."/>
            <person name="Okada M."/>
            <person name="Plessy C."/>
            <person name="Shibata K."/>
            <person name="Shiraki T."/>
            <person name="Suzuki S."/>
            <person name="Tagami M."/>
            <person name="Waki K."/>
            <person name="Watahiki A."/>
            <person name="Okamura-Oho Y."/>
            <person name="Suzuki H."/>
            <person name="Kawai J."/>
            <person name="Hayashizaki Y."/>
        </authorList>
    </citation>
    <scope>NUCLEOTIDE SEQUENCE [LARGE SCALE MRNA] OF 125-823 (ISOFORM 5)</scope>
    <source>
        <strain>C57BL/6J</strain>
    </source>
</reference>
<reference key="6">
    <citation type="journal article" date="1995" name="Mol. Cell. Biol.">
        <title>The cytoplasmic tyrosine kinase FER is associated with the catenin-like substrate pp120 and is activated by growth factors.</title>
        <authorList>
            <person name="Kim L."/>
            <person name="Wong T.W."/>
        </authorList>
    </citation>
    <scope>FUNCTION IN PHOSPHORYLATION OF CTNND1</scope>
    <scope>AUTOPHOSPHORYLATION</scope>
    <scope>INTERACTION WITH CTNND1 AND PDGFR</scope>
</reference>
<reference key="7">
    <citation type="journal article" date="1998" name="FEBS Lett.">
        <title>Tyrosine phosphorylation of the TATA element modulatory factor by the FER nuclear tyrosine kinases.</title>
        <authorList>
            <person name="Schwartz Y."/>
            <person name="Ben-Dor I."/>
            <person name="Navon A."/>
            <person name="Motro B."/>
            <person name="Nir U."/>
        </authorList>
    </citation>
    <scope>FUNCTION IN PHOSPHORYLATION OF TMF1</scope>
    <scope>AUTOPHOSPHORYLATION</scope>
    <scope>MUTAGENESIS OF GLY-571</scope>
    <scope>CHARACTERIZATION OF ISOFORM 4</scope>
</reference>
<reference key="8">
    <citation type="journal article" date="1999" name="Cell Growth Differ.">
        <title>Cell cycle-dependent nuclear accumulation of the p94fer tyrosine kinase is regulated by its NH2 terminus and is affected by kinase domain integrity and ATP binding.</title>
        <authorList>
            <person name="Ben-Dor I."/>
            <person name="Bern O."/>
            <person name="Tennenbaum T."/>
            <person name="Nir U."/>
        </authorList>
    </citation>
    <scope>SUBCELLULAR LOCATION</scope>
    <scope>PHOSPHORYLATION AT TYR-715</scope>
    <scope>MUTAGENESIS OF TYR-715</scope>
</reference>
<reference key="9">
    <citation type="journal article" date="1999" name="J. Biol. Chem.">
        <title>Disruption of coiled-coil domains in Fer protein-tyrosine kinase abolishes trimerization but not kinase activation.</title>
        <authorList>
            <person name="Craig A.W."/>
            <person name="Zirngibl R."/>
            <person name="Greer P."/>
        </authorList>
    </citation>
    <scope>CATALYTIC ACTIVITY</scope>
    <scope>SUBUNIT</scope>
    <scope>DOMAIN</scope>
    <scope>MUTAGENESIS OF 135-LYS-LEU-136; 322-MET-LEU-323; LYS-592 AND ASP-743</scope>
    <scope>AUTOPHOSPHORYLATION</scope>
    <scope>TISSUE SPECIFICITY</scope>
</reference>
<reference key="10">
    <citation type="journal article" date="2000" name="J. Biol. Chem.">
        <title>FER kinase activation of Stat3 is determined by the N-terminal sequence.</title>
        <authorList>
            <person name="Priel-Halachmi S."/>
            <person name="Ben-Dor I."/>
            <person name="Shpungin S."/>
            <person name="Tennenbaum T."/>
            <person name="Molavani H."/>
            <person name="Bachrach M."/>
            <person name="Salzberg S."/>
            <person name="Nir U."/>
        </authorList>
    </citation>
    <scope>FUNCTION IN PHOSPHORYLATION OF STAT3</scope>
    <scope>INTERACTION WITH STAT3</scope>
    <scope>AUTOPHOSPHORYLATION</scope>
    <scope>SUBCELLULAR LOCATION</scope>
</reference>
<reference key="11">
    <citation type="journal article" date="2001" name="Exp. Cell Res.">
        <title>Subcellular localization analysis of the closely related Fps/Fes and Fer protein-tyrosine kinases suggests a distinct role for Fps/Fes in vesicular trafficking.</title>
        <authorList>
            <person name="Zirngibl R."/>
            <person name="Schulze D."/>
            <person name="Mirski S.E."/>
            <person name="Cole S.P."/>
            <person name="Greer P.A."/>
        </authorList>
    </citation>
    <scope>SUBCELLULAR LOCATION</scope>
</reference>
<reference key="12">
    <citation type="journal article" date="2001" name="Mol. Cell. Biol.">
        <title>Mice devoid of fer protein-tyrosine kinase activity are viable and fertile but display reduced cortactin phosphorylation.</title>
        <authorList>
            <person name="Craig A.W."/>
            <person name="Zirngibl R."/>
            <person name="Williams K."/>
            <person name="Cole L.A."/>
            <person name="Greer P.A."/>
        </authorList>
    </citation>
    <scope>DISRUPTION PHENOTYPE</scope>
    <scope>ALTERNATIVE SPLICING</scope>
    <scope>TISSUE SPECIFICITY</scope>
</reference>
<reference key="13">
    <citation type="journal article" date="2002" name="Biochem. Biophys. Res. Commun.">
        <title>Direct binding of plectin to Fer kinase and negative regulation of its catalytic activity.</title>
        <authorList>
            <person name="Lunter P.C."/>
            <person name="Wiche G."/>
        </authorList>
    </citation>
    <scope>INTERACTION WITH PLEC</scope>
</reference>
<reference key="14">
    <citation type="journal article" date="2002" name="J. Immunol.">
        <title>Absence of Fer protein-tyrosine kinase exacerbates leukocyte recruitment in response to endotoxin.</title>
        <authorList>
            <person name="McCafferty D.M."/>
            <person name="Craig A.W."/>
            <person name="Senis Y.A."/>
            <person name="Greer P.A."/>
        </authorList>
    </citation>
    <scope>FUNCTION IN RESPONSE TO LIPOPOLYSACCHARIDE AND LEUKOCYTE DIAPEDESIS</scope>
</reference>
<reference key="15">
    <citation type="journal article" date="2003" name="Exp. Hematol.">
        <title>Fps/Fes and Fer protein-tyrosine kinases play redundant roles in regulating hematopoiesis.</title>
        <authorList>
            <person name="Senis Y.A."/>
            <person name="Craig A.W."/>
            <person name="Greer P.A."/>
        </authorList>
    </citation>
    <scope>DISRUPTION PHENOTYPE</scope>
</reference>
<reference key="16">
    <citation type="journal article" date="2003" name="Mol. Endocrinol.">
        <title>Fer is a downstream effector of insulin and mediates the activation of signal transducer and activator of transcription 3 in myogenic cells.</title>
        <authorList>
            <person name="Taler M."/>
            <person name="Shpungin S."/>
            <person name="Salem Y."/>
            <person name="Malovani H."/>
            <person name="Pasder O."/>
            <person name="Nir U."/>
        </authorList>
    </citation>
    <scope>INDUCTION BY INSULIN</scope>
    <scope>INTERACTION WITH STAT3 AND JAK1</scope>
</reference>
<reference key="17">
    <citation type="journal article" date="2004" name="J. Cell Sci.">
        <title>Continuous association of cadherin with beta-catenin requires the non-receptor tyrosine-kinase Fer.</title>
        <authorList>
            <person name="Xu G."/>
            <person name="Craig A.W."/>
            <person name="Greer P."/>
            <person name="Miller M."/>
            <person name="Anastasiadis P.Z."/>
            <person name="Lilien J."/>
            <person name="Balsamo J."/>
        </authorList>
    </citation>
    <scope>FUNCTION IN PHOSPHORYLATION OF PTPN1</scope>
</reference>
<reference key="18">
    <citation type="journal article" date="2004" name="Oncogene">
        <title>TMF/ARA160 is a BC-box-containing protein that mediates the degradation of Stat3.</title>
        <authorList>
            <person name="Perry E."/>
            <person name="Tsruya R."/>
            <person name="Levitsky P."/>
            <person name="Pomp O."/>
            <person name="Taller M."/>
            <person name="Weisberg S."/>
            <person name="Parris W."/>
            <person name="Kulkarni S."/>
            <person name="Malovani H."/>
            <person name="Pawson T."/>
            <person name="Shpungin S."/>
            <person name="Nir U."/>
        </authorList>
    </citation>
    <scope>INTERACTION WITH TMF1</scope>
</reference>
<reference key="19">
    <citation type="journal article" date="2005" name="Mol. Biol. Cell">
        <title>Phosphorylation of N-cadherin-associated cortactin by Fer kinase regulates N-cadherin mobility and intercellular adhesion strength.</title>
        <authorList>
            <person name="El Sayegh T.Y."/>
            <person name="Arora P.D."/>
            <person name="Fan L."/>
            <person name="Laschinger C.A."/>
            <person name="Greer P.A."/>
            <person name="McCulloch C.A."/>
            <person name="Kapus A."/>
        </authorList>
    </citation>
    <scope>FUNCTION IN PHOSPHORYLATION OF CTTN</scope>
    <scope>PHOSPHORYLATION</scope>
    <scope>SUBCELLULAR LOCATION</scope>
</reference>
<reference key="20">
    <citation type="journal article" date="2006" name="J. Biol. Chem.">
        <title>Fer and Fps/Fes participate in a Lyn-dependent pathway from FcepsilonRI to platelet-endothelial cell adhesion molecule 1 to limit mast cell activation.</title>
        <authorList>
            <person name="Udell C.M."/>
            <person name="Samayawardhena L.A."/>
            <person name="Kawakami Y."/>
            <person name="Kawakami T."/>
            <person name="Craig A.W."/>
        </authorList>
    </citation>
    <scope>FUNCTION IN MAST CELL ACTIVATION</scope>
    <scope>FUNCTION IN PHOSPHORYLATION OF PECAM1</scope>
    <scope>PHOSPHORYLATION</scope>
    <scope>ACTIVITY REGULATION</scope>
</reference>
<reference key="21">
    <citation type="journal article" date="2006" name="Oncogene">
        <title>Downregulation of Fer induces PP1 activation and cell-cycle arrest in malignant cells.</title>
        <authorList>
            <person name="Pasder O."/>
            <person name="Shpungin S."/>
            <person name="Salem Y."/>
            <person name="Makovsky A."/>
            <person name="Vilchick S."/>
            <person name="Michaeli S."/>
            <person name="Malovani H."/>
            <person name="Nir U."/>
        </authorList>
    </citation>
    <scope>FUNCTION</scope>
    <scope>MUTAGENESIS OF PHE-606</scope>
    <scope>INTERACTION WITH PPP1CA</scope>
</reference>
<reference key="22">
    <citation type="journal article" date="2007" name="J. Immunol.">
        <title>Quantitative time-resolved phosphoproteomic analysis of mast cell signaling.</title>
        <authorList>
            <person name="Cao L."/>
            <person name="Yu K."/>
            <person name="Banh C."/>
            <person name="Nguyen V."/>
            <person name="Ritz A."/>
            <person name="Raphael B.J."/>
            <person name="Kawakami Y."/>
            <person name="Kawakami T."/>
            <person name="Salomon A.R."/>
        </authorList>
    </citation>
    <scope>PHOSPHORYLATION [LARGE SCALE ANALYSIS] AT TYR-402</scope>
    <scope>IDENTIFICATION BY MASS SPECTROMETRY [LARGE SCALE ANALYSIS]</scope>
    <source>
        <tissue>Mast cell</tissue>
    </source>
</reference>
<reference key="23">
    <citation type="journal article" date="2007" name="Mol. Cell. Biol.">
        <title>Fer-mediated cortactin phosphorylation is associated with efficient fibroblast migration and is dependent on reactive oxygen species generation during integrin-mediated cell adhesion.</title>
        <authorList>
            <person name="Sangrar W."/>
            <person name="Gao Y."/>
            <person name="Scott M."/>
            <person name="Truesdell P."/>
            <person name="Greer P.A."/>
        </authorList>
    </citation>
    <scope>FUNCTION</scope>
    <scope>ACTIVITY REGULATION</scope>
</reference>
<reference key="24">
    <citation type="journal article" date="2009" name="Cell. Signal.">
        <title>Hsp90 and a tyrosine embedded in the Hsp90 recognition loop are required for the Fer tyrosine kinase activity.</title>
        <authorList>
            <person name="Hikri E."/>
            <person name="Shpungin S."/>
            <person name="Nir U."/>
        </authorList>
    </citation>
    <scope>FUNCTION IN STAT3 PHOSPHORYLATION</scope>
    <scope>INTERACTION WITH HSP90</scope>
    <scope>PHOSPHORYLATION AT TYR-616</scope>
    <scope>MUTAGENESIS OF TYR-616</scope>
    <scope>UBIQUITINATION</scope>
    <scope>PROTEASOMAL DEGRADATION</scope>
</reference>
<reference key="25">
    <citation type="journal article" date="2009" name="Mol. Cell. Proteomics">
        <title>Large scale localization of protein phosphorylation by use of electron capture dissociation mass spectrometry.</title>
        <authorList>
            <person name="Sweet S.M."/>
            <person name="Bailey C.M."/>
            <person name="Cunningham D.L."/>
            <person name="Heath J.K."/>
            <person name="Cooper H.J."/>
        </authorList>
    </citation>
    <scope>PHOSPHORYLATION [LARGE SCALE ANALYSIS] AT TYR-402</scope>
    <scope>IDENTIFICATION BY MASS SPECTROMETRY [LARGE SCALE ANALYSIS]</scope>
    <source>
        <tissue>Embryonic fibroblast</tissue>
    </source>
</reference>
<reference key="26">
    <citation type="journal article" date="2010" name="Cell">
        <title>A tissue-specific atlas of mouse protein phosphorylation and expression.</title>
        <authorList>
            <person name="Huttlin E.L."/>
            <person name="Jedrychowski M.P."/>
            <person name="Elias J.E."/>
            <person name="Goswami T."/>
            <person name="Rad R."/>
            <person name="Beausoleil S.A."/>
            <person name="Villen J."/>
            <person name="Haas W."/>
            <person name="Sowa M.E."/>
            <person name="Gygi S.P."/>
        </authorList>
    </citation>
    <scope>IDENTIFICATION BY MASS SPECTROMETRY [LARGE SCALE ANALYSIS]</scope>
    <source>
        <tissue>Brain</tissue>
        <tissue>Brown adipose tissue</tissue>
        <tissue>Testis</tissue>
    </source>
</reference>
<reference key="27">
    <citation type="journal article" date="2010" name="J. Biol. Chem.">
        <title>Neuropilin 1 directly interacts with Fer kinase to mediate semaphorin 3A-induced death of cortical neurons.</title>
        <authorList>
            <person name="Jiang S.X."/>
            <person name="Whitehead S."/>
            <person name="Aylsworth A."/>
            <person name="Slinn J."/>
            <person name="Zurakowski B."/>
            <person name="Chan K."/>
            <person name="Li J."/>
            <person name="Hou S.T."/>
        </authorList>
    </citation>
    <scope>FUNCTION IN NEURONAL CELL DEATH AFTER BRAIN DAMAGE</scope>
    <scope>INTERACTION WITH NRP1</scope>
</reference>
<feature type="chain" id="PRO_0000260825" description="Tyrosine-protein kinase Fer">
    <location>
        <begin position="1"/>
        <end position="823"/>
    </location>
</feature>
<feature type="domain" description="F-BAR" evidence="6">
    <location>
        <begin position="1"/>
        <end position="259"/>
    </location>
</feature>
<feature type="domain" description="SH2" evidence="5">
    <location>
        <begin position="461"/>
        <end position="551"/>
    </location>
</feature>
<feature type="domain" description="Protein kinase" evidence="4">
    <location>
        <begin position="564"/>
        <end position="817"/>
    </location>
</feature>
<feature type="region of interest" description="Important for interaction with membranes containing phosphoinositides" evidence="1">
    <location>
        <begin position="1"/>
        <end position="300"/>
    </location>
</feature>
<feature type="region of interest" description="Disordered" evidence="8">
    <location>
        <begin position="389"/>
        <end position="408"/>
    </location>
</feature>
<feature type="coiled-coil region" evidence="3">
    <location>
        <begin position="123"/>
        <end position="185"/>
    </location>
</feature>
<feature type="coiled-coil region" evidence="3">
    <location>
        <begin position="301"/>
        <end position="381"/>
    </location>
</feature>
<feature type="active site" description="Proton acceptor" evidence="4 7">
    <location>
        <position position="685"/>
    </location>
</feature>
<feature type="binding site" evidence="4">
    <location>
        <begin position="570"/>
        <end position="578"/>
    </location>
    <ligand>
        <name>ATP</name>
        <dbReference type="ChEBI" id="CHEBI:30616"/>
    </ligand>
</feature>
<feature type="binding site" evidence="4">
    <location>
        <position position="592"/>
    </location>
    <ligand>
        <name>ATP</name>
        <dbReference type="ChEBI" id="CHEBI:30616"/>
    </ligand>
</feature>
<feature type="modified residue" description="Phosphotyrosine" evidence="35 36">
    <location>
        <position position="402"/>
    </location>
</feature>
<feature type="modified residue" description="Phosphoserine" evidence="2">
    <location>
        <position position="434"/>
    </location>
</feature>
<feature type="modified residue" description="Phosphotyrosine; by autocatalysis" evidence="25">
    <location>
        <position position="616"/>
    </location>
</feature>
<feature type="modified residue" description="Phosphotyrosine; by autocatalysis" evidence="9">
    <location>
        <position position="715"/>
    </location>
</feature>
<feature type="splice variant" id="VSP_041766" description="In isoform 4." evidence="33">
    <location>
        <begin position="1"/>
        <end position="369"/>
    </location>
</feature>
<feature type="splice variant" id="VSP_021634" description="In isoform 2." evidence="31">
    <location>
        <begin position="70"/>
        <end position="127"/>
    </location>
</feature>
<feature type="splice variant" id="VSP_041767" description="In isoform 4." evidence="33">
    <original>LRCTEAKCAAQKALLEQKVQENDGKEPPPVVNYEEDARSVTSM</original>
    <variation>MDKSMECPHCEGVLEPESDPQFSKKCSIPLSPGPSSSEILRYK</variation>
    <location>
        <begin position="370"/>
        <end position="412"/>
    </location>
</feature>
<feature type="splice variant" id="VSP_041768" description="In isoform 4 and isoform 5." evidence="32 33">
    <location>
        <position position="444"/>
    </location>
</feature>
<feature type="splice variant" id="VSP_041769" description="In isoform 3." evidence="30">
    <original>GEYVLSVYSDGQRRHFIIQFVDNLYRFEGTGFSNIPQLIDHHFNTKQVITKK</original>
    <variation>ESVSIRGHRVFKHSPAYRSPLQYKASHHQEVWGGSAQPHPKG</variation>
    <location>
        <begin position="491"/>
        <end position="542"/>
    </location>
</feature>
<feature type="splice variant" id="VSP_041770" description="In isoform 3." evidence="30">
    <location>
        <begin position="543"/>
        <end position="823"/>
    </location>
</feature>
<feature type="mutagenesis site" description="Abolishes homooligomerization." evidence="10">
    <original>KL</original>
    <variation>RP</variation>
    <location>
        <begin position="135"/>
        <end position="136"/>
    </location>
</feature>
<feature type="mutagenesis site" description="Abolishes homooligomerization." evidence="10">
    <original>ML</original>
    <variation>RP</variation>
    <location>
        <begin position="322"/>
        <end position="323"/>
    </location>
</feature>
<feature type="mutagenesis site" description="Abolishes kinase activity." evidence="29">
    <original>G</original>
    <variation>R</variation>
    <location>
        <position position="571"/>
    </location>
</feature>
<feature type="mutagenesis site" description="Abolishes kinase activity." evidence="10">
    <original>K</original>
    <variation>R</variation>
    <location>
        <position position="592"/>
    </location>
</feature>
<feature type="mutagenesis site" description="Abolishes interaction with PPP1CA." evidence="23">
    <original>F</original>
    <variation>A</variation>
    <location>
        <position position="606"/>
    </location>
</feature>
<feature type="mutagenesis site" description="Abolishes autophosphorylation." evidence="25">
    <original>Y</original>
    <variation>F</variation>
    <location>
        <position position="616"/>
    </location>
</feature>
<feature type="mutagenesis site" description="Abolishes autophosphorylation." evidence="9">
    <original>Y</original>
    <variation>F</variation>
    <location>
        <position position="715"/>
    </location>
</feature>
<feature type="mutagenesis site" description="Abolishes kinase activity." evidence="10">
    <original>D</original>
    <variation>R</variation>
    <location>
        <position position="743"/>
    </location>
</feature>
<feature type="sequence conflict" description="In Ref. 5; BAC38626." evidence="34" ref="5">
    <original>A</original>
    <variation>G</variation>
    <location>
        <position position="328"/>
    </location>
</feature>
<feature type="sequence conflict" description="In Ref. 1; AAB18988 and 3; AAG40730." evidence="34" ref="1 3">
    <original>T</original>
    <variation>S</variation>
    <location>
        <position position="373"/>
    </location>
</feature>
<feature type="sequence conflict" description="In Ref. 2; AAA37617." evidence="34" ref="2">
    <original>P</original>
    <variation>A</variation>
    <location>
        <position position="730"/>
    </location>
</feature>
<comment type="function">
    <text evidence="11 12 15 19 21 22 23 24 25 26 28 29">Tyrosine-protein kinase that acts downstream of cell surface receptors for growth factors and plays a role in the regulation of the actin cytoskeleton, microtubule assembly, lamellipodia formation, cell adhesion, cell migration and chemotaxis. Acts downstream of EGFR, KIT, PDGFRA and PDGFRB. Acts downstream of EGFR to promote activation of NF-kappa-B and cell proliferation. May play a role in the regulation of the mitotic cell cycle. Plays a role in the insulin receptor signaling pathway and in activation of phosphatidylinositol 3-kinase. Acts downstream of the activated FCER1 receptor and plays a role in FCER1 (high affinity immunoglobulin epsilon receptor)-mediated signaling in mast cells. Plays a role in the regulation of mast cell degranulation. Plays a role in leukocyte recruitment and diapedesis in response to bacterial lipopolysaccharide (LPS). Phosphorylates CTTN, CTNND1, PTK2/FAK1, GAB1, PECAM1 and PTPN11. May phosphorylate JUP and PTPN1. Can phosphorylate STAT3 according to PubMed:10878010 and PubMed:19159681, but clearly plays a redundant role in STAT3 phosphorylation. According to PubMed:11134346, cells where wild type FER has been replaced by a kinase-dead mutant show no reduction in STAT3 phosphorylation. Phosphorylates TMF1. Isoform 3 lacks kinase activity.</text>
</comment>
<comment type="catalytic activity">
    <reaction evidence="7 10">
        <text>L-tyrosyl-[protein] + ATP = O-phospho-L-tyrosyl-[protein] + ADP + H(+)</text>
        <dbReference type="Rhea" id="RHEA:10596"/>
        <dbReference type="Rhea" id="RHEA-COMP:10136"/>
        <dbReference type="Rhea" id="RHEA-COMP:20101"/>
        <dbReference type="ChEBI" id="CHEBI:15378"/>
        <dbReference type="ChEBI" id="CHEBI:30616"/>
        <dbReference type="ChEBI" id="CHEBI:46858"/>
        <dbReference type="ChEBI" id="CHEBI:61978"/>
        <dbReference type="ChEBI" id="CHEBI:456216"/>
        <dbReference type="EC" id="2.7.10.2"/>
    </reaction>
</comment>
<comment type="activity regulation">
    <text evidence="1 22 24">Activated by phosphatidic acid binding (By similarity). Activated by hydrogen peroxide (in vitro). Activated by reactive oxygen species (ROS).</text>
</comment>
<comment type="subunit">
    <text evidence="1 10 11 12 16 17 20 23 25 26 28">Homotrimer. Isoform 4 is a monomer, due to the absence of the N-terminal coiled coil domains. Interacts with CTNND1, EGFR, FLT3, PECAM1 and PDGFR. Interacts (via SH2 domain) with CTTN. Component of a complex that contains at least FER, CTTN and PTK2/FAK1 (By similarity). Interacts with IRS1 and PIK3R1. Interacts with STAT3. Interacts with PPP1CA and regulates its phosphorylation at 'Thr-320'. Interacts with JAK1. Interacts with HSP90; this stabilizes phosphorylated FER and protects FER against proteasomal degradation. Interacts with ARHGDIA, NRP1, PLEC and TMF1.</text>
</comment>
<comment type="subcellular location">
    <subcellularLocation>
        <location>Cytoplasm</location>
    </subcellularLocation>
    <subcellularLocation>
        <location>Cytoplasm</location>
        <location>Cytoskeleton</location>
    </subcellularLocation>
    <subcellularLocation>
        <location evidence="1">Cell membrane</location>
        <topology evidence="1">Peripheral membrane protein</topology>
        <orientation evidence="1">Cytoplasmic side</orientation>
    </subcellularLocation>
    <subcellularLocation>
        <location evidence="1">Cell projection</location>
    </subcellularLocation>
    <subcellularLocation>
        <location evidence="1">Cell junction</location>
    </subcellularLocation>
    <subcellularLocation>
        <location evidence="1">Membrane</location>
        <topology evidence="1">Peripheral membrane protein</topology>
        <orientation evidence="1">Cytoplasmic side</orientation>
    </subcellularLocation>
    <subcellularLocation>
        <location>Nucleus</location>
    </subcellularLocation>
    <subcellularLocation>
        <location evidence="1">Cytoplasm</location>
        <location evidence="1">Cell cortex</location>
    </subcellularLocation>
    <text evidence="1 14">Detected on microtubules in polarized and motile vascular endothelial cells. Colocalizes with F-actin at the cell cortex. Colocalizes with PECAM1 and CTNND1 at nascent cell-cell contacts (By similarity). Not detected in the nucleus, but detected in the nuclear area surrounding the chromosomes after breakdown of the nuclear envelope during mitosis (PubMed:11339827).</text>
</comment>
<comment type="subcellular location">
    <molecule>Isoform 4</molecule>
    <subcellularLocation>
        <location>Nucleus</location>
    </subcellularLocation>
</comment>
<comment type="alternative products">
    <event type="alternative splicing"/>
    <isoform>
        <id>P70451-1</id>
        <name>1</name>
        <sequence type="displayed"/>
    </isoform>
    <isoform>
        <id>P70451-2</id>
        <name>2</name>
        <sequence type="described" ref="VSP_021634"/>
    </isoform>
    <isoform>
        <id>P70451-3</id>
        <name>3</name>
        <name>iFer</name>
        <sequence type="described" ref="VSP_041769 VSP_041770"/>
    </isoform>
    <isoform>
        <id>P70451-4</id>
        <name>4</name>
        <name>FerT</name>
        <name>p51FerT</name>
        <sequence type="described" ref="VSP_041766 VSP_041767 VSP_041768"/>
    </isoform>
    <isoform>
        <id>P70451-5</id>
        <name>5</name>
        <sequence type="described" ref="VSP_041768"/>
    </isoform>
</comment>
<comment type="tissue specificity">
    <text evidence="10 13 27">Detected in liver and testis. Isoform 4 is detected only in testis (at protein level). Widely expressed.</text>
</comment>
<comment type="induction">
    <text evidence="17">Up-regulated by insulin in myogenic cells (in vitro).</text>
</comment>
<comment type="domain">
    <text evidence="1">The coiled coil domains mediate homooligomerization and are required for location at microtubules.</text>
</comment>
<comment type="domain">
    <text evidence="1">The N-terminal region including the first coiled coil domain mediates interaction with phosphoinositide-containing membranes.</text>
</comment>
<comment type="PTM">
    <text evidence="9 21 22 25">Autophosphorylated.</text>
</comment>
<comment type="PTM">
    <text evidence="25">Polyubiquitinated; this leads to proteasomal degradation.</text>
</comment>
<comment type="disruption phenotype">
    <text evidence="13 18">No visible phenotype, and the mice are fertile. Mice have reduced CTTN phosphorylation. Mice lacking both Fps/Fes and Fer activity are viable and fertile, but produce slightly fewer pups per litter than normal. They display elevated levels of circulating neutrophils, erythrocytes and platelets, while other cell counts are normal.</text>
</comment>
<comment type="similarity">
    <text evidence="4">Belongs to the protein kinase superfamily. Tyr protein kinase family. Fes/fps subfamily.</text>
</comment>
<organism>
    <name type="scientific">Mus musculus</name>
    <name type="common">Mouse</name>
    <dbReference type="NCBI Taxonomy" id="10090"/>
    <lineage>
        <taxon>Eukaryota</taxon>
        <taxon>Metazoa</taxon>
        <taxon>Chordata</taxon>
        <taxon>Craniata</taxon>
        <taxon>Vertebrata</taxon>
        <taxon>Euteleostomi</taxon>
        <taxon>Mammalia</taxon>
        <taxon>Eutheria</taxon>
        <taxon>Euarchontoglires</taxon>
        <taxon>Glires</taxon>
        <taxon>Rodentia</taxon>
        <taxon>Myomorpha</taxon>
        <taxon>Muroidea</taxon>
        <taxon>Muridae</taxon>
        <taxon>Murinae</taxon>
        <taxon>Mus</taxon>
        <taxon>Mus</taxon>
    </lineage>
</organism>
<evidence type="ECO:0000250" key="1"/>
<evidence type="ECO:0000250" key="2">
    <source>
        <dbReference type="UniProtKB" id="P16591"/>
    </source>
</evidence>
<evidence type="ECO:0000255" key="3"/>
<evidence type="ECO:0000255" key="4">
    <source>
        <dbReference type="PROSITE-ProRule" id="PRU00159"/>
    </source>
</evidence>
<evidence type="ECO:0000255" key="5">
    <source>
        <dbReference type="PROSITE-ProRule" id="PRU00191"/>
    </source>
</evidence>
<evidence type="ECO:0000255" key="6">
    <source>
        <dbReference type="PROSITE-ProRule" id="PRU01077"/>
    </source>
</evidence>
<evidence type="ECO:0000255" key="7">
    <source>
        <dbReference type="PROSITE-ProRule" id="PRU10028"/>
    </source>
</evidence>
<evidence type="ECO:0000256" key="8">
    <source>
        <dbReference type="SAM" id="MobiDB-lite"/>
    </source>
</evidence>
<evidence type="ECO:0000269" key="9">
    <source>
    </source>
</evidence>
<evidence type="ECO:0000269" key="10">
    <source>
    </source>
</evidence>
<evidence type="ECO:0000269" key="11">
    <source>
    </source>
</evidence>
<evidence type="ECO:0000269" key="12">
    <source>
    </source>
</evidence>
<evidence type="ECO:0000269" key="13">
    <source>
    </source>
</evidence>
<evidence type="ECO:0000269" key="14">
    <source>
    </source>
</evidence>
<evidence type="ECO:0000269" key="15">
    <source>
    </source>
</evidence>
<evidence type="ECO:0000269" key="16">
    <source>
    </source>
</evidence>
<evidence type="ECO:0000269" key="17">
    <source>
    </source>
</evidence>
<evidence type="ECO:0000269" key="18">
    <source>
    </source>
</evidence>
<evidence type="ECO:0000269" key="19">
    <source>
    </source>
</evidence>
<evidence type="ECO:0000269" key="20">
    <source>
    </source>
</evidence>
<evidence type="ECO:0000269" key="21">
    <source>
    </source>
</evidence>
<evidence type="ECO:0000269" key="22">
    <source>
    </source>
</evidence>
<evidence type="ECO:0000269" key="23">
    <source>
    </source>
</evidence>
<evidence type="ECO:0000269" key="24">
    <source>
    </source>
</evidence>
<evidence type="ECO:0000269" key="25">
    <source>
    </source>
</evidence>
<evidence type="ECO:0000269" key="26">
    <source>
    </source>
</evidence>
<evidence type="ECO:0000269" key="27">
    <source>
    </source>
</evidence>
<evidence type="ECO:0000269" key="28">
    <source>
    </source>
</evidence>
<evidence type="ECO:0000269" key="29">
    <source>
    </source>
</evidence>
<evidence type="ECO:0000303" key="30">
    <source>
    </source>
</evidence>
<evidence type="ECO:0000303" key="31">
    <source>
    </source>
</evidence>
<evidence type="ECO:0000303" key="32">
    <source>
    </source>
</evidence>
<evidence type="ECO:0000303" key="33">
    <source>
    </source>
</evidence>
<evidence type="ECO:0000305" key="34"/>
<evidence type="ECO:0007744" key="35">
    <source>
    </source>
</evidence>
<evidence type="ECO:0007744" key="36">
    <source>
    </source>
</evidence>
<protein>
    <recommendedName>
        <fullName>Tyrosine-protein kinase Fer</fullName>
        <ecNumber>2.7.10.2</ecNumber>
    </recommendedName>
    <alternativeName>
        <fullName>Proto-oncogene c-Fer</fullName>
    </alternativeName>
    <alternativeName>
        <fullName>p94-Fer</fullName>
    </alternativeName>
</protein>
<keyword id="KW-0025">Alternative splicing</keyword>
<keyword id="KW-0067">ATP-binding</keyword>
<keyword id="KW-0965">Cell junction</keyword>
<keyword id="KW-1003">Cell membrane</keyword>
<keyword id="KW-0966">Cell projection</keyword>
<keyword id="KW-0175">Coiled coil</keyword>
<keyword id="KW-0963">Cytoplasm</keyword>
<keyword id="KW-0206">Cytoskeleton</keyword>
<keyword id="KW-0418">Kinase</keyword>
<keyword id="KW-0446">Lipid-binding</keyword>
<keyword id="KW-0472">Membrane</keyword>
<keyword id="KW-0547">Nucleotide-binding</keyword>
<keyword id="KW-0539">Nucleus</keyword>
<keyword id="KW-0597">Phosphoprotein</keyword>
<keyword id="KW-0656">Proto-oncogene</keyword>
<keyword id="KW-1185">Reference proteome</keyword>
<keyword id="KW-0727">SH2 domain</keyword>
<keyword id="KW-0808">Transferase</keyword>
<keyword id="KW-0829">Tyrosine-protein kinase</keyword>
<keyword id="KW-0832">Ubl conjugation</keyword>